<dbReference type="EC" id="6.3.3.3" evidence="1"/>
<dbReference type="EMBL" id="AM747720">
    <property type="protein sequence ID" value="CAR50974.1"/>
    <property type="molecule type" value="Genomic_DNA"/>
</dbReference>
<dbReference type="RefSeq" id="WP_006483466.1">
    <property type="nucleotide sequence ID" value="NC_011000.1"/>
</dbReference>
<dbReference type="SMR" id="B4E9L5"/>
<dbReference type="GeneID" id="56559520"/>
<dbReference type="KEGG" id="bcj:BCAL0665"/>
<dbReference type="eggNOG" id="COG0132">
    <property type="taxonomic scope" value="Bacteria"/>
</dbReference>
<dbReference type="HOGENOM" id="CLU_072551_0_0_4"/>
<dbReference type="BioCyc" id="BCEN216591:G1G1V-753-MONOMER"/>
<dbReference type="UniPathway" id="UPA00078">
    <property type="reaction ID" value="UER00161"/>
</dbReference>
<dbReference type="Proteomes" id="UP000001035">
    <property type="component" value="Chromosome 1"/>
</dbReference>
<dbReference type="GO" id="GO:0005829">
    <property type="term" value="C:cytosol"/>
    <property type="evidence" value="ECO:0007669"/>
    <property type="project" value="TreeGrafter"/>
</dbReference>
<dbReference type="GO" id="GO:0005524">
    <property type="term" value="F:ATP binding"/>
    <property type="evidence" value="ECO:0007669"/>
    <property type="project" value="UniProtKB-UniRule"/>
</dbReference>
<dbReference type="GO" id="GO:0004141">
    <property type="term" value="F:dethiobiotin synthase activity"/>
    <property type="evidence" value="ECO:0007669"/>
    <property type="project" value="UniProtKB-UniRule"/>
</dbReference>
<dbReference type="GO" id="GO:0000287">
    <property type="term" value="F:magnesium ion binding"/>
    <property type="evidence" value="ECO:0007669"/>
    <property type="project" value="UniProtKB-UniRule"/>
</dbReference>
<dbReference type="GO" id="GO:0009102">
    <property type="term" value="P:biotin biosynthetic process"/>
    <property type="evidence" value="ECO:0007669"/>
    <property type="project" value="UniProtKB-UniRule"/>
</dbReference>
<dbReference type="CDD" id="cd03109">
    <property type="entry name" value="DTBS"/>
    <property type="match status" value="1"/>
</dbReference>
<dbReference type="FunFam" id="3.40.50.300:FF:000292">
    <property type="entry name" value="ATP-dependent dethiobiotin synthetase BioD"/>
    <property type="match status" value="1"/>
</dbReference>
<dbReference type="Gene3D" id="3.40.50.300">
    <property type="entry name" value="P-loop containing nucleotide triphosphate hydrolases"/>
    <property type="match status" value="1"/>
</dbReference>
<dbReference type="HAMAP" id="MF_00336">
    <property type="entry name" value="BioD"/>
    <property type="match status" value="1"/>
</dbReference>
<dbReference type="InterPro" id="IPR004472">
    <property type="entry name" value="DTB_synth_BioD"/>
</dbReference>
<dbReference type="InterPro" id="IPR027417">
    <property type="entry name" value="P-loop_NTPase"/>
</dbReference>
<dbReference type="NCBIfam" id="TIGR00347">
    <property type="entry name" value="bioD"/>
    <property type="match status" value="1"/>
</dbReference>
<dbReference type="PANTHER" id="PTHR43210">
    <property type="entry name" value="DETHIOBIOTIN SYNTHETASE"/>
    <property type="match status" value="1"/>
</dbReference>
<dbReference type="PANTHER" id="PTHR43210:SF5">
    <property type="entry name" value="DETHIOBIOTIN SYNTHETASE"/>
    <property type="match status" value="1"/>
</dbReference>
<dbReference type="Pfam" id="PF13500">
    <property type="entry name" value="AAA_26"/>
    <property type="match status" value="1"/>
</dbReference>
<dbReference type="PIRSF" id="PIRSF006755">
    <property type="entry name" value="DTB_synth"/>
    <property type="match status" value="1"/>
</dbReference>
<dbReference type="SUPFAM" id="SSF52540">
    <property type="entry name" value="P-loop containing nucleoside triphosphate hydrolases"/>
    <property type="match status" value="1"/>
</dbReference>
<sequence length="239" mass="25111">MTAPLSLFVTGTDTEIGKTFVSAAMLHGFARHGLRAAALKPVAAGAYQRDGVWRNEDADQLDAAANVVLPPELRTPFLLKAPAAPHIVAAQEGVTLDLDTIVACHREALTRADVVVVEGVGGFRVPLNDTQDTADLAVALGLPVVLVVGIRLGCISHALLTADAIRQRGLALAGWVANHVDPAMSFADENVATIRDWLAREHRAPLVGRIAHMTPAAPESAAAMLDIAALVESLRAARP</sequence>
<keyword id="KW-0067">ATP-binding</keyword>
<keyword id="KW-0093">Biotin biosynthesis</keyword>
<keyword id="KW-0963">Cytoplasm</keyword>
<keyword id="KW-0436">Ligase</keyword>
<keyword id="KW-0460">Magnesium</keyword>
<keyword id="KW-0479">Metal-binding</keyword>
<keyword id="KW-0547">Nucleotide-binding</keyword>
<name>BIOD_BURCJ</name>
<reference key="1">
    <citation type="journal article" date="2009" name="J. Bacteriol.">
        <title>The genome of Burkholderia cenocepacia J2315, an epidemic pathogen of cystic fibrosis patients.</title>
        <authorList>
            <person name="Holden M.T."/>
            <person name="Seth-Smith H.M."/>
            <person name="Crossman L.C."/>
            <person name="Sebaihia M."/>
            <person name="Bentley S.D."/>
            <person name="Cerdeno-Tarraga A.M."/>
            <person name="Thomson N.R."/>
            <person name="Bason N."/>
            <person name="Quail M.A."/>
            <person name="Sharp S."/>
            <person name="Cherevach I."/>
            <person name="Churcher C."/>
            <person name="Goodhead I."/>
            <person name="Hauser H."/>
            <person name="Holroyd N."/>
            <person name="Mungall K."/>
            <person name="Scott P."/>
            <person name="Walker D."/>
            <person name="White B."/>
            <person name="Rose H."/>
            <person name="Iversen P."/>
            <person name="Mil-Homens D."/>
            <person name="Rocha E.P."/>
            <person name="Fialho A.M."/>
            <person name="Baldwin A."/>
            <person name="Dowson C."/>
            <person name="Barrell B.G."/>
            <person name="Govan J.R."/>
            <person name="Vandamme P."/>
            <person name="Hart C.A."/>
            <person name="Mahenthiralingam E."/>
            <person name="Parkhill J."/>
        </authorList>
    </citation>
    <scope>NUCLEOTIDE SEQUENCE [LARGE SCALE GENOMIC DNA]</scope>
    <source>
        <strain>ATCC BAA-245 / DSM 16553 / LMG 16656 / NCTC 13227 / J2315 / CF5610</strain>
    </source>
</reference>
<comment type="function">
    <text evidence="1">Catalyzes a mechanistically unusual reaction, the ATP-dependent insertion of CO2 between the N7 and N8 nitrogen atoms of 7,8-diaminopelargonic acid (DAPA, also called 7,8-diammoniononanoate) to form a ureido ring.</text>
</comment>
<comment type="catalytic activity">
    <reaction evidence="1">
        <text>(7R,8S)-7,8-diammoniononanoate + CO2 + ATP = (4R,5S)-dethiobiotin + ADP + phosphate + 3 H(+)</text>
        <dbReference type="Rhea" id="RHEA:15805"/>
        <dbReference type="ChEBI" id="CHEBI:15378"/>
        <dbReference type="ChEBI" id="CHEBI:16526"/>
        <dbReference type="ChEBI" id="CHEBI:30616"/>
        <dbReference type="ChEBI" id="CHEBI:43474"/>
        <dbReference type="ChEBI" id="CHEBI:149469"/>
        <dbReference type="ChEBI" id="CHEBI:149473"/>
        <dbReference type="ChEBI" id="CHEBI:456216"/>
        <dbReference type="EC" id="6.3.3.3"/>
    </reaction>
</comment>
<comment type="cofactor">
    <cofactor evidence="1">
        <name>Mg(2+)</name>
        <dbReference type="ChEBI" id="CHEBI:18420"/>
    </cofactor>
</comment>
<comment type="pathway">
    <text evidence="1">Cofactor biosynthesis; biotin biosynthesis; biotin from 7,8-diaminononanoate: step 1/2.</text>
</comment>
<comment type="subunit">
    <text evidence="1">Homodimer.</text>
</comment>
<comment type="subcellular location">
    <subcellularLocation>
        <location evidence="1">Cytoplasm</location>
    </subcellularLocation>
</comment>
<comment type="similarity">
    <text evidence="1">Belongs to the dethiobiotin synthetase family.</text>
</comment>
<protein>
    <recommendedName>
        <fullName evidence="1">ATP-dependent dethiobiotin synthetase BioD</fullName>
        <ecNumber evidence="1">6.3.3.3</ecNumber>
    </recommendedName>
    <alternativeName>
        <fullName evidence="1">DTB synthetase</fullName>
        <shortName evidence="1">DTBS</shortName>
    </alternativeName>
    <alternativeName>
        <fullName evidence="1">Dethiobiotin synthase</fullName>
    </alternativeName>
</protein>
<accession>B4E9L5</accession>
<evidence type="ECO:0000255" key="1">
    <source>
        <dbReference type="HAMAP-Rule" id="MF_00336"/>
    </source>
</evidence>
<organism>
    <name type="scientific">Burkholderia cenocepacia (strain ATCC BAA-245 / DSM 16553 / LMG 16656 / NCTC 13227 / J2315 / CF5610)</name>
    <name type="common">Burkholderia cepacia (strain J2315)</name>
    <dbReference type="NCBI Taxonomy" id="216591"/>
    <lineage>
        <taxon>Bacteria</taxon>
        <taxon>Pseudomonadati</taxon>
        <taxon>Pseudomonadota</taxon>
        <taxon>Betaproteobacteria</taxon>
        <taxon>Burkholderiales</taxon>
        <taxon>Burkholderiaceae</taxon>
        <taxon>Burkholderia</taxon>
        <taxon>Burkholderia cepacia complex</taxon>
    </lineage>
</organism>
<feature type="chain" id="PRO_1000119862" description="ATP-dependent dethiobiotin synthetase BioD">
    <location>
        <begin position="1"/>
        <end position="239"/>
    </location>
</feature>
<feature type="active site" evidence="1">
    <location>
        <position position="40"/>
    </location>
</feature>
<feature type="binding site" evidence="1">
    <location>
        <begin position="15"/>
        <end position="20"/>
    </location>
    <ligand>
        <name>ATP</name>
        <dbReference type="ChEBI" id="CHEBI:30616"/>
    </ligand>
</feature>
<feature type="binding site" evidence="1">
    <location>
        <position position="19"/>
    </location>
    <ligand>
        <name>Mg(2+)</name>
        <dbReference type="ChEBI" id="CHEBI:18420"/>
    </ligand>
</feature>
<feature type="binding site" evidence="1">
    <location>
        <position position="57"/>
    </location>
    <ligand>
        <name>ATP</name>
        <dbReference type="ChEBI" id="CHEBI:30616"/>
    </ligand>
</feature>
<feature type="binding site" evidence="1">
    <location>
        <position position="57"/>
    </location>
    <ligand>
        <name>Mg(2+)</name>
        <dbReference type="ChEBI" id="CHEBI:18420"/>
    </ligand>
</feature>
<feature type="binding site" evidence="1">
    <location>
        <begin position="118"/>
        <end position="121"/>
    </location>
    <ligand>
        <name>ATP</name>
        <dbReference type="ChEBI" id="CHEBI:30616"/>
    </ligand>
</feature>
<feature type="binding site" evidence="1">
    <location>
        <position position="118"/>
    </location>
    <ligand>
        <name>Mg(2+)</name>
        <dbReference type="ChEBI" id="CHEBI:18420"/>
    </ligand>
</feature>
<feature type="binding site" evidence="1">
    <location>
        <begin position="178"/>
        <end position="179"/>
    </location>
    <ligand>
        <name>ATP</name>
        <dbReference type="ChEBI" id="CHEBI:30616"/>
    </ligand>
</feature>
<proteinExistence type="inferred from homology"/>
<gene>
    <name evidence="1" type="primary">bioD</name>
    <name type="ordered locus">BceJ2315_06590</name>
    <name type="ORF">BCAL0665</name>
</gene>